<keyword id="KW-0025">Alternative splicing</keyword>
<keyword id="KW-0040">ANK repeat</keyword>
<keyword id="KW-0238">DNA-binding</keyword>
<keyword id="KW-0479">Metal-binding</keyword>
<keyword id="KW-1185">Reference proteome</keyword>
<keyword id="KW-0677">Repeat</keyword>
<keyword id="KW-0862">Zinc</keyword>
<keyword id="KW-0863">Zinc-finger</keyword>
<reference key="1">
    <citation type="journal article" date="2005" name="Mol. Genet. Genomics">
        <title>A fine physical map of the rice chromosome 5.</title>
        <authorList>
            <person name="Cheng C.-H."/>
            <person name="Chung M.C."/>
            <person name="Liu S.-M."/>
            <person name="Chen S.-K."/>
            <person name="Kao F.Y."/>
            <person name="Lin S.-J."/>
            <person name="Hsiao S.-H."/>
            <person name="Tseng I.C."/>
            <person name="Hsing Y.-I.C."/>
            <person name="Wu H.-P."/>
            <person name="Chen C.-S."/>
            <person name="Shaw J.-F."/>
            <person name="Wu J."/>
            <person name="Matsumoto T."/>
            <person name="Sasaki T."/>
            <person name="Chen H.-C."/>
            <person name="Chow T.-Y."/>
        </authorList>
    </citation>
    <scope>NUCLEOTIDE SEQUENCE [LARGE SCALE GENOMIC DNA]</scope>
    <source>
        <strain>cv. Nipponbare</strain>
    </source>
</reference>
<reference key="2">
    <citation type="journal article" date="2005" name="Nature">
        <title>The map-based sequence of the rice genome.</title>
        <authorList>
            <consortium name="International rice genome sequencing project (IRGSP)"/>
        </authorList>
    </citation>
    <scope>NUCLEOTIDE SEQUENCE [LARGE SCALE GENOMIC DNA]</scope>
    <source>
        <strain>cv. Nipponbare</strain>
    </source>
</reference>
<reference key="3">
    <citation type="journal article" date="2008" name="Nucleic Acids Res.">
        <title>The rice annotation project database (RAP-DB): 2008 update.</title>
        <authorList>
            <consortium name="The rice annotation project (RAP)"/>
        </authorList>
    </citation>
    <scope>GENOME REANNOTATION</scope>
    <source>
        <strain>cv. Nipponbare</strain>
    </source>
</reference>
<reference key="4">
    <citation type="journal article" date="2013" name="Rice">
        <title>Improvement of the Oryza sativa Nipponbare reference genome using next generation sequence and optical map data.</title>
        <authorList>
            <person name="Kawahara Y."/>
            <person name="de la Bastide M."/>
            <person name="Hamilton J.P."/>
            <person name="Kanamori H."/>
            <person name="McCombie W.R."/>
            <person name="Ouyang S."/>
            <person name="Schwartz D.C."/>
            <person name="Tanaka T."/>
            <person name="Wu J."/>
            <person name="Zhou S."/>
            <person name="Childs K.L."/>
            <person name="Davidson R.M."/>
            <person name="Lin H."/>
            <person name="Quesada-Ocampo L."/>
            <person name="Vaillancourt B."/>
            <person name="Sakai H."/>
            <person name="Lee S.S."/>
            <person name="Kim J."/>
            <person name="Numa H."/>
            <person name="Itoh T."/>
            <person name="Buell C.R."/>
            <person name="Matsumoto T."/>
        </authorList>
    </citation>
    <scope>GENOME REANNOTATION</scope>
    <source>
        <strain>cv. Nipponbare</strain>
    </source>
</reference>
<reference key="5">
    <citation type="journal article" date="2003" name="Science">
        <title>Collection, mapping, and annotation of over 28,000 cDNA clones from japonica rice.</title>
        <authorList>
            <consortium name="The rice full-length cDNA consortium"/>
        </authorList>
    </citation>
    <scope>NUCLEOTIDE SEQUENCE [LARGE SCALE MRNA] (ISOFORMS 1 AND 2)</scope>
    <source>
        <strain>cv. Nipponbare</strain>
    </source>
</reference>
<reference key="6">
    <citation type="journal article" date="2008" name="BMC Genomics">
        <title>Genome-wide analysis of CCCH zinc finger family in Arabidopsis and rice.</title>
        <authorList>
            <person name="Wang D."/>
            <person name="Guo Y."/>
            <person name="Wu C."/>
            <person name="Yang G."/>
            <person name="Li Y."/>
            <person name="Zheng C."/>
        </authorList>
    </citation>
    <scope>NOMENCLATURE</scope>
</reference>
<organism>
    <name type="scientific">Oryza sativa subsp. japonica</name>
    <name type="common">Rice</name>
    <dbReference type="NCBI Taxonomy" id="39947"/>
    <lineage>
        <taxon>Eukaryota</taxon>
        <taxon>Viridiplantae</taxon>
        <taxon>Streptophyta</taxon>
        <taxon>Embryophyta</taxon>
        <taxon>Tracheophyta</taxon>
        <taxon>Spermatophyta</taxon>
        <taxon>Magnoliopsida</taxon>
        <taxon>Liliopsida</taxon>
        <taxon>Poales</taxon>
        <taxon>Poaceae</taxon>
        <taxon>BOP clade</taxon>
        <taxon>Oryzoideae</taxon>
        <taxon>Oryzeae</taxon>
        <taxon>Oryzinae</taxon>
        <taxon>Oryza</taxon>
        <taxon>Oryza sativa</taxon>
    </lineage>
</organism>
<sequence length="601" mass="63236">MCSGPRKPSTPPLPQQQKEATVMAASLLLELAAADDVAAVRRVVEEEKVSLGVAGLWYGPSASGVARLGMERRTAAMVAALYGSTGVLGYVVAAAPAEAARASETDGATPLHMAAAGGAANAVAATRLLLAAGASVDALSASGLRAGDLLPRATAAEKAIRLLLKSPAVSPSSSPKKSASPPSPPPPQEAKKEYPPDLTLPDLKSGLFSTDEFRMYSFKVKPCSRAYSHDWTECPFVHPGENARRRDPRRYSYSCVPCPEFRKGGSCRKGDACEYAHGVFECWLHPAQYRTRLCKDEVGCARRICFFAHKPDELRAVNPSAVSVGMQPTVSSPRSSPPNGLDMAAAAAAMMSPAWPSSPASRLKTALGARELDFDLEMLALDQYQQKLFDKVSGAPSPRASWGAAANGLATASPARAVPDYTDLLGSVDPAMLSQLHALSLKQAGDMPAYSSMADTTQMHMPTSPMVGGANTAFGLDHSMAKAIMSSRASAFAKRSQSFIDRGGRAPAARSLMSPATTGAPSILSDWGSPDGKLDWGVQGDELHKLRKSASFAFRGQSAMPVATHAAAAEPDVSWVNSLVKDGHAAGDIFAQWPEQEQMVA</sequence>
<evidence type="ECO:0000255" key="1">
    <source>
        <dbReference type="PROSITE-ProRule" id="PRU00723"/>
    </source>
</evidence>
<evidence type="ECO:0000256" key="2">
    <source>
        <dbReference type="SAM" id="MobiDB-lite"/>
    </source>
</evidence>
<evidence type="ECO:0000303" key="3">
    <source>
    </source>
</evidence>
<proteinExistence type="evidence at transcript level"/>
<gene>
    <name type="ordered locus">Os05g0128200</name>
    <name type="ordered locus">LOC_Os05g03760</name>
    <name type="ORF">OSJNBa0056I11.7</name>
</gene>
<accession>Q688R3</accession>
<accession>Q0DL22</accession>
<feature type="chain" id="PRO_0000346828" description="Zinc finger CCCH domain-containing protein 33">
    <location>
        <begin position="1"/>
        <end position="601"/>
    </location>
</feature>
<feature type="repeat" description="ANK 1">
    <location>
        <begin position="71"/>
        <end position="101"/>
    </location>
</feature>
<feature type="repeat" description="ANK 2">
    <location>
        <begin position="106"/>
        <end position="138"/>
    </location>
</feature>
<feature type="zinc finger region" description="C3H1-type 1" evidence="1">
    <location>
        <begin position="252"/>
        <end position="280"/>
    </location>
</feature>
<feature type="zinc finger region" description="C3H1-type 2" evidence="1">
    <location>
        <begin position="288"/>
        <end position="312"/>
    </location>
</feature>
<feature type="region of interest" description="Disordered" evidence="2">
    <location>
        <begin position="167"/>
        <end position="203"/>
    </location>
</feature>
<feature type="compositionally biased region" description="Low complexity" evidence="2">
    <location>
        <begin position="167"/>
        <end position="180"/>
    </location>
</feature>
<feature type="splice variant" id="VSP_035020" description="In isoform 2." evidence="3">
    <original>GMQPTVSSPRSSPPNGLDMAAAAAAMMSPAWPSSPASRLKTALGARELDFDLEMLA</original>
    <variation>VRVPRPIRHAGGDARRGGGAGRVMGELSCQGRPRRRRHIRAVAGAGADGGMIIRGS</variation>
    <location>
        <begin position="325"/>
        <end position="380"/>
    </location>
</feature>
<feature type="splice variant" id="VSP_035021" description="In isoform 2." evidence="3">
    <location>
        <begin position="381"/>
        <end position="601"/>
    </location>
</feature>
<comment type="alternative products">
    <event type="alternative splicing"/>
    <isoform>
        <id>Q688R3-1</id>
        <name>1</name>
        <sequence type="displayed"/>
    </isoform>
    <isoform>
        <id>Q688R3-2</id>
        <name>2</name>
        <sequence type="described" ref="VSP_035020 VSP_035021"/>
    </isoform>
</comment>
<protein>
    <recommendedName>
        <fullName>Zinc finger CCCH domain-containing protein 33</fullName>
        <shortName>OsC3H33</shortName>
    </recommendedName>
</protein>
<dbReference type="EMBL" id="AC130598">
    <property type="protein sequence ID" value="AAU10743.1"/>
    <property type="molecule type" value="Genomic_DNA"/>
</dbReference>
<dbReference type="EMBL" id="AP008211">
    <property type="protein sequence ID" value="BAF16451.1"/>
    <property type="molecule type" value="Genomic_DNA"/>
</dbReference>
<dbReference type="EMBL" id="AP014961">
    <property type="protein sequence ID" value="BAS92088.1"/>
    <property type="molecule type" value="Genomic_DNA"/>
</dbReference>
<dbReference type="EMBL" id="AP014961">
    <property type="protein sequence ID" value="BAS92089.1"/>
    <property type="molecule type" value="Genomic_DNA"/>
</dbReference>
<dbReference type="EMBL" id="AK099898">
    <property type="status" value="NOT_ANNOTATED_CDS"/>
    <property type="molecule type" value="mRNA"/>
</dbReference>
<dbReference type="EMBL" id="AK105767">
    <property type="status" value="NOT_ANNOTATED_CDS"/>
    <property type="molecule type" value="mRNA"/>
</dbReference>
<dbReference type="RefSeq" id="XP_015639743.1">
    <property type="nucleotide sequence ID" value="XM_015784257.1"/>
</dbReference>
<dbReference type="SMR" id="Q688R3"/>
<dbReference type="FunCoup" id="Q688R3">
    <property type="interactions" value="37"/>
</dbReference>
<dbReference type="STRING" id="39947.Q688R3"/>
<dbReference type="PaxDb" id="39947-Q688R3"/>
<dbReference type="EnsemblPlants" id="Os05t0128200-01">
    <molecule id="Q688R3-1"/>
    <property type="protein sequence ID" value="Os05t0128200-01"/>
    <property type="gene ID" value="Os05g0128200"/>
</dbReference>
<dbReference type="Gramene" id="Os05t0128200-01">
    <molecule id="Q688R3-1"/>
    <property type="protein sequence ID" value="Os05t0128200-01"/>
    <property type="gene ID" value="Os05g0128200"/>
</dbReference>
<dbReference type="KEGG" id="dosa:Os05g0128200"/>
<dbReference type="eggNOG" id="KOG1595">
    <property type="taxonomic scope" value="Eukaryota"/>
</dbReference>
<dbReference type="HOGENOM" id="CLU_015068_2_0_1"/>
<dbReference type="InParanoid" id="Q688R3"/>
<dbReference type="OMA" id="SMEGESH"/>
<dbReference type="OrthoDB" id="410307at2759"/>
<dbReference type="Proteomes" id="UP000000763">
    <property type="component" value="Chromosome 5"/>
</dbReference>
<dbReference type="Proteomes" id="UP000059680">
    <property type="component" value="Chromosome 5"/>
</dbReference>
<dbReference type="ExpressionAtlas" id="Q688R3">
    <property type="expression patterns" value="baseline and differential"/>
</dbReference>
<dbReference type="GO" id="GO:0003677">
    <property type="term" value="F:DNA binding"/>
    <property type="evidence" value="ECO:0007669"/>
    <property type="project" value="UniProtKB-KW"/>
</dbReference>
<dbReference type="GO" id="GO:0008270">
    <property type="term" value="F:zinc ion binding"/>
    <property type="evidence" value="ECO:0007669"/>
    <property type="project" value="UniProtKB-KW"/>
</dbReference>
<dbReference type="GO" id="GO:0010468">
    <property type="term" value="P:regulation of gene expression"/>
    <property type="evidence" value="ECO:0007669"/>
    <property type="project" value="UniProtKB-ARBA"/>
</dbReference>
<dbReference type="FunFam" id="3.30.1370.210:FF:000009">
    <property type="entry name" value="Zinc finger CCCH domain-containing protein 66"/>
    <property type="match status" value="1"/>
</dbReference>
<dbReference type="Gene3D" id="3.30.1370.210">
    <property type="match status" value="1"/>
</dbReference>
<dbReference type="Gene3D" id="1.25.40.20">
    <property type="entry name" value="Ankyrin repeat-containing domain"/>
    <property type="match status" value="1"/>
</dbReference>
<dbReference type="InterPro" id="IPR002110">
    <property type="entry name" value="Ankyrin_rpt"/>
</dbReference>
<dbReference type="InterPro" id="IPR036770">
    <property type="entry name" value="Ankyrin_rpt-contain_sf"/>
</dbReference>
<dbReference type="InterPro" id="IPR045234">
    <property type="entry name" value="Unkempt-like"/>
</dbReference>
<dbReference type="InterPro" id="IPR000571">
    <property type="entry name" value="Znf_CCCH"/>
</dbReference>
<dbReference type="PANTHER" id="PTHR14493">
    <property type="entry name" value="UNKEMPT FAMILY MEMBER"/>
    <property type="match status" value="1"/>
</dbReference>
<dbReference type="PANTHER" id="PTHR14493:SF87">
    <property type="entry name" value="ZINC FINGER CCCH DOMAIN-CONTAINING PROTEIN 66"/>
    <property type="match status" value="1"/>
</dbReference>
<dbReference type="Pfam" id="PF00642">
    <property type="entry name" value="zf-CCCH"/>
    <property type="match status" value="1"/>
</dbReference>
<dbReference type="Pfam" id="PF25512">
    <property type="entry name" value="zf-CCCH_AtC3H23"/>
    <property type="match status" value="1"/>
</dbReference>
<dbReference type="SMART" id="SM00356">
    <property type="entry name" value="ZnF_C3H1"/>
    <property type="match status" value="2"/>
</dbReference>
<dbReference type="SUPFAM" id="SSF48403">
    <property type="entry name" value="Ankyrin repeat"/>
    <property type="match status" value="1"/>
</dbReference>
<dbReference type="PROSITE" id="PS50297">
    <property type="entry name" value="ANK_REP_REGION"/>
    <property type="match status" value="1"/>
</dbReference>
<dbReference type="PROSITE" id="PS50088">
    <property type="entry name" value="ANK_REPEAT"/>
    <property type="match status" value="1"/>
</dbReference>
<dbReference type="PROSITE" id="PS50103">
    <property type="entry name" value="ZF_C3H1"/>
    <property type="match status" value="2"/>
</dbReference>
<name>C3H33_ORYSJ</name>